<comment type="function">
    <text evidence="3 6 7 8 9 10 11 12 20">Multidrug efflux pump that functions as a H(+)/organic cation antiporter (PubMed:16330770, PubMed:17509534). Plays a physiological role in the excretion of cationic compounds including endogenous metabolites, drugs, toxins through the kidney and liver, into urine and bile respectively (PubMed:16330770, PubMed:17495125, PubMed:17509534, PubMed:17582384, PubMed:18305230, PubMed:19158817, PubMed:21128598, PubMed:24961373). Mediates the efflux of endogenous compounds such as creatinine, vitamin B1/thiamine, agmatine and estrone-3-sulfate (PubMed:16330770, PubMed:17495125, PubMed:17509534, PubMed:17582384, PubMed:18305230, PubMed:19158817, PubMed:21128598, PubMed:24961373). May also contribute to regulate the transport of cationic compounds in testis across the blood-testis-barrier (Probable).</text>
</comment>
<comment type="catalytic activity">
    <reaction evidence="7 19">
        <text>thiamine(out) + H(+)(in) = thiamine(in) + H(+)(out)</text>
        <dbReference type="Rhea" id="RHEA:71271"/>
        <dbReference type="ChEBI" id="CHEBI:15378"/>
        <dbReference type="ChEBI" id="CHEBI:18385"/>
    </reaction>
</comment>
<comment type="catalytic activity">
    <reaction evidence="7">
        <text>estrone 3-sulfate(in) + H(+)(out) = estrone 3-sulfate(out) + H(+)(in)</text>
        <dbReference type="Rhea" id="RHEA:72139"/>
        <dbReference type="ChEBI" id="CHEBI:15378"/>
        <dbReference type="ChEBI" id="CHEBI:60050"/>
    </reaction>
</comment>
<comment type="catalytic activity">
    <reaction evidence="7">
        <text>creatinine(in) + H(+)(out) = creatinine(out) + H(+)(in)</text>
        <dbReference type="Rhea" id="RHEA:72183"/>
        <dbReference type="ChEBI" id="CHEBI:15378"/>
        <dbReference type="ChEBI" id="CHEBI:16737"/>
    </reaction>
</comment>
<comment type="catalytic activity">
    <reaction evidence="11">
        <text>agmatine(in) + H(+)(out) = agmatine(out) + H(+)(in)</text>
        <dbReference type="Rhea" id="RHEA:72127"/>
        <dbReference type="ChEBI" id="CHEBI:15378"/>
        <dbReference type="ChEBI" id="CHEBI:58145"/>
    </reaction>
    <physiologicalReaction direction="left-to-right" evidence="18">
        <dbReference type="Rhea" id="RHEA:72128"/>
    </physiologicalReaction>
    <physiologicalReaction direction="right-to-left" evidence="18">
        <dbReference type="Rhea" id="RHEA:72129"/>
    </physiologicalReaction>
</comment>
<comment type="biophysicochemical properties">
    <kinetics>
        <KM evidence="3 7">0.38 mM for TEA</KM>
        <KM evidence="9">0.58 mM for TEA</KM>
        <KM evidence="3 7">0.1 mM for MPP</KM>
        <KM evidence="3 7">0.17 mM for cimetidine</KM>
        <KM evidence="9">7.4 uM for cimetidine</KM>
        <KM evidence="3 7">0.78 mM for metformin</KM>
        <KM evidence="3 7">2.1 mM for guanidine</KM>
        <KM evidence="3 7">1.23 mM for procainamide</KM>
        <KM evidence="3 7">0.07 mM for topotecan</KM>
        <KM evidence="3 7">0.47 mM for estrone sulfate</KM>
        <KM evidence="3 7">2.64 mM for acyclovir</KM>
        <KM evidence="11">240 uM for agmatine (at pH 8.0)</KM>
        <KM evidence="12">830 uM for thiamine</KM>
        <KM evidence="3 7">5.12 mM for ganciclovir</KM>
        <Vmax evidence="11">0.192 nmol/min/mg enzyme toward agmatine (at pH 8.0)</Vmax>
        <Vmax evidence="12">2.94 nmol/min/mg enzyme toward thiamine</Vmax>
        <Vmax evidence="3 7">1.185 nmol/min/mg enzyme toward TEA</Vmax>
        <Vmax evidence="9">0.81 nmol/min/mg enzyme toward TEA</Vmax>
        <Vmax evidence="3 7">0.735 nmol/min/mg enzyme toward MPP</Vmax>
        <Vmax evidence="3 7">0.135 nmol/min/mg enzyme toward cimetidine</Vmax>
        <Vmax evidence="9">0.104 nmol/min/mg enzyme toward cimetidine</Vmax>
        <Vmax evidence="3 7">2.23 nmol/min/mg enzyme toward metformin</Vmax>
        <Vmax evidence="3 7">0.89 nmol/min/mg enzyme toward guanidine</Vmax>
        <Vmax evidence="3 7">3.78 nmol/min/mg enzyme toward procainamide</Vmax>
        <Vmax evidence="3 7">0.21 nmol/min/mg enzyme toward topotecan</Vmax>
        <Vmax evidence="3 7">0.265 nmol/min/mg enzyme toward estrone sulfate</Vmax>
        <Vmax evidence="3 7">0.62 nmol/min/mg enzyme toward acyclovir</Vmax>
        <Vmax evidence="3 7">1.08 nmol/min/mg enzyme toward ganciclovir</Vmax>
    </kinetics>
    <phDependence>
        <text evidence="3 7 11">Optimum pH is 8.0 for agmatine uptake (PubMed:21128598). Optimum pH is 8.5. Active from pH 6 to 8.5.</text>
    </phDependence>
</comment>
<comment type="interaction">
    <interactant intactId="EBI-12887226">
        <id>Q96FL8</id>
    </interactant>
    <interactant intactId="EBI-713304">
        <id>Q9H0Q3</id>
        <label>FXYD6</label>
    </interactant>
    <organismsDiffer>false</organismsDiffer>
    <experiments>3</experiments>
</comment>
<comment type="subcellular location">
    <subcellularLocation>
        <location evidence="4 9 10">Cell membrane</location>
        <topology evidence="1">Multi-pass membrane protein</topology>
    </subcellularLocation>
    <subcellularLocation>
        <location evidence="3">Apical cell membrane</location>
        <topology evidence="1">Multi-pass membrane protein</topology>
    </subcellularLocation>
    <text evidence="3">Localizes to the plasma membrane; at the brush border membranes of the proximal tubules (kidney) and at the bile caniculi (liver).</text>
</comment>
<comment type="alternative products">
    <event type="alternative splicing"/>
    <isoform>
        <id>Q96FL8-1</id>
        <name>1</name>
        <sequence type="displayed"/>
    </isoform>
    <isoform>
        <id>Q96FL8-2</id>
        <name>2</name>
        <sequence type="described" ref="VSP_029903 VSP_029904"/>
    </isoform>
    <isoform>
        <id>Q96FL8-3</id>
        <name>3</name>
        <sequence type="described" ref="VSP_029905"/>
    </isoform>
</comment>
<comment type="tissue specificity">
    <text evidence="3 7 14">Widely expressed. The highest expression is found in adrenal gland, and to a lower extent in liver, skeletal muscle and kidney. In testis, primarily localized throughout the adluminal compartment of the seminiferous tubules with expression at the peritubular myoid cells and Leydig cells (PubMed:35307651).</text>
</comment>
<comment type="miscellaneous">
    <text evidence="3 5 6 7 8 9 10 11 13">Mediates the efflux of cationic compounds such as the model cations, tetraethylammonium (TEA), the neurotoxin 1-methyl-4-phenylpyridinium (MPP), the platinum-based drugs cisplatin and oxaliplatin, the drugs procainamide, acyclovir and topotecan, or weak bases that are positively charged at physiological pH, such as cimetidine or the antidiabetic drug metformin.</text>
</comment>
<comment type="similarity">
    <text evidence="17">Belongs to the multi antimicrobial extrusion (MATE) (TC 2.A.66.1) family.</text>
</comment>
<comment type="sequence caution" evidence="17">
    <conflict type="erroneous initiation">
        <sequence resource="EMBL-CDS" id="AAH50592"/>
    </conflict>
    <text>Extended N-terminus.</text>
</comment>
<dbReference type="EMBL" id="AK001709">
    <property type="protein sequence ID" value="BAA91852.1"/>
    <property type="molecule type" value="mRNA"/>
</dbReference>
<dbReference type="EMBL" id="AK222625">
    <property type="protein sequence ID" value="BAD96345.1"/>
    <property type="molecule type" value="mRNA"/>
</dbReference>
<dbReference type="EMBL" id="CH471212">
    <property type="protein sequence ID" value="EAW50893.1"/>
    <property type="molecule type" value="Genomic_DNA"/>
</dbReference>
<dbReference type="EMBL" id="CH471212">
    <property type="protein sequence ID" value="EAW50894.1"/>
    <property type="molecule type" value="Genomic_DNA"/>
</dbReference>
<dbReference type="EMBL" id="BC010661">
    <property type="protein sequence ID" value="AAH10661.1"/>
    <property type="molecule type" value="mRNA"/>
</dbReference>
<dbReference type="EMBL" id="BC050592">
    <property type="protein sequence ID" value="AAH50592.1"/>
    <property type="status" value="ALT_INIT"/>
    <property type="molecule type" value="mRNA"/>
</dbReference>
<dbReference type="EMBL" id="BC058882">
    <property type="protein sequence ID" value="AAH58882.1"/>
    <property type="molecule type" value="mRNA"/>
</dbReference>
<dbReference type="CCDS" id="CCDS11209.1">
    <molecule id="Q96FL8-1"/>
</dbReference>
<dbReference type="RefSeq" id="NP_060712.2">
    <molecule id="Q96FL8-1"/>
    <property type="nucleotide sequence ID" value="NM_018242.2"/>
</dbReference>
<dbReference type="SMR" id="Q96FL8"/>
<dbReference type="BioGRID" id="120535">
    <property type="interactions" value="58"/>
</dbReference>
<dbReference type="FunCoup" id="Q96FL8">
    <property type="interactions" value="693"/>
</dbReference>
<dbReference type="IntAct" id="Q96FL8">
    <property type="interactions" value="51"/>
</dbReference>
<dbReference type="STRING" id="9606.ENSP00000270570"/>
<dbReference type="BindingDB" id="Q96FL8"/>
<dbReference type="ChEMBL" id="CHEMBL1743126"/>
<dbReference type="DrugBank" id="DB12001">
    <property type="generic name" value="Abemaciclib"/>
</dbReference>
<dbReference type="DrugBank" id="DB00787">
    <property type="generic name" value="Acyclovir"/>
</dbReference>
<dbReference type="DrugBank" id="DB06288">
    <property type="generic name" value="Amisulpride"/>
</dbReference>
<dbReference type="DrugBank" id="DB11901">
    <property type="generic name" value="Apalutamide"/>
</dbReference>
<dbReference type="DrugBank" id="DB05025">
    <property type="generic name" value="Arimoclomol"/>
</dbReference>
<dbReference type="DrugBank" id="DB16098">
    <property type="generic name" value="Atogepant"/>
</dbReference>
<dbReference type="DrugBank" id="DB15233">
    <property type="generic name" value="Avapritinib"/>
</dbReference>
<dbReference type="DrugBank" id="DB11799">
    <property type="generic name" value="Bictegravir"/>
</dbReference>
<dbReference type="DrugBank" id="DB12267">
    <property type="generic name" value="Brigatinib"/>
</dbReference>
<dbReference type="DrugBank" id="DB12218">
    <property type="generic name" value="Capivasertib"/>
</dbReference>
<dbReference type="DrugBank" id="DB11791">
    <property type="generic name" value="Capmatinib"/>
</dbReference>
<dbReference type="DrugBank" id="DB01333">
    <property type="generic name" value="Cefradine"/>
</dbReference>
<dbReference type="DrugBank" id="DB00567">
    <property type="generic name" value="Cephalexin"/>
</dbReference>
<dbReference type="DrugBank" id="DB00501">
    <property type="generic name" value="Cimetidine"/>
</dbReference>
<dbReference type="DrugBank" id="DB00537">
    <property type="generic name" value="Ciprofloxacin"/>
</dbReference>
<dbReference type="DrugBank" id="DB08930">
    <property type="generic name" value="Dolutegravir"/>
</dbReference>
<dbReference type="DrugBank" id="DB00879">
    <property type="generic name" value="Emtricitabine"/>
</dbReference>
<dbReference type="DrugBank" id="DB04574">
    <property type="generic name" value="Estrone sulfate"/>
</dbReference>
<dbReference type="DrugBank" id="DB00927">
    <property type="generic name" value="Famotidine"/>
</dbReference>
<dbReference type="DrugBank" id="DB12500">
    <property type="generic name" value="Fedratinib"/>
</dbReference>
<dbReference type="DrugBank" id="DB12265">
    <property type="generic name" value="Fexinidazole"/>
</dbReference>
<dbReference type="DrugBank" id="DB01195">
    <property type="generic name" value="Flecainide"/>
</dbReference>
<dbReference type="DrugBank" id="DB16628">
    <property type="generic name" value="Fosdenopterin"/>
</dbReference>
<dbReference type="DrugBank" id="DB01004">
    <property type="generic name" value="Ganciclovir"/>
</dbReference>
<dbReference type="DrugBank" id="DB15097">
    <property type="generic name" value="Gefapixant"/>
</dbReference>
<dbReference type="DrugBank" id="DB12141">
    <property type="generic name" value="Gilteritinib"/>
</dbReference>
<dbReference type="DrugBank" id="DB11978">
    <property type="generic name" value="Glasdegib"/>
</dbReference>
<dbReference type="DrugBank" id="DB00986">
    <property type="generic name" value="Glycopyrronium"/>
</dbReference>
<dbReference type="DrugBank" id="DB01018">
    <property type="generic name" value="Guanfacine"/>
</dbReference>
<dbReference type="DrugBank" id="DB00536">
    <property type="generic name" value="Guanidine"/>
</dbReference>
<dbReference type="DrugBank" id="DB11886">
    <property type="generic name" value="Infigratinib"/>
</dbReference>
<dbReference type="DrugBank" id="DB11757">
    <property type="generic name" value="Istradefylline"/>
</dbReference>
<dbReference type="DrugBank" id="DB11732">
    <property type="generic name" value="Lasmiditan"/>
</dbReference>
<dbReference type="DrugBank" id="DB01137">
    <property type="generic name" value="Levofloxacin"/>
</dbReference>
<dbReference type="DrugBank" id="DB05667">
    <property type="generic name" value="Levoketoconazole"/>
</dbReference>
<dbReference type="DrugBank" id="DB04948">
    <property type="generic name" value="Lofexidine"/>
</dbReference>
<dbReference type="DrugBank" id="DB05501">
    <property type="generic name" value="Mavorixafor"/>
</dbReference>
<dbReference type="DrugBank" id="DB01043">
    <property type="generic name" value="Memantine"/>
</dbReference>
<dbReference type="DrugBank" id="DB00331">
    <property type="generic name" value="Metformin"/>
</dbReference>
<dbReference type="DrugBank" id="DB09241">
    <property type="generic name" value="Methylene blue"/>
</dbReference>
<dbReference type="DrugBank" id="DB08840">
    <property type="generic name" value="N-methylnicotinamide"/>
</dbReference>
<dbReference type="DrugBank" id="DB01203">
    <property type="generic name" value="Nadolol"/>
</dbReference>
<dbReference type="DrugBank" id="DB11793">
    <property type="generic name" value="Niraparib"/>
</dbReference>
<dbReference type="DrugBank" id="DB16267">
    <property type="generic name" value="Olutasidenib"/>
</dbReference>
<dbReference type="DrugBank" id="DB11837">
    <property type="generic name" value="Osilodrostat"/>
</dbReference>
<dbReference type="DrugBank" id="DB15102">
    <property type="generic name" value="Pemigatinib"/>
</dbReference>
<dbReference type="DrugBank" id="DB12978">
    <property type="generic name" value="Pexidartinib"/>
</dbReference>
<dbReference type="DrugBank" id="DB12615">
    <property type="generic name" value="Plazomicin"/>
</dbReference>
<dbReference type="DrugBank" id="DB15822">
    <property type="generic name" value="Pralsetinib"/>
</dbReference>
<dbReference type="DrugBank" id="DB01035">
    <property type="generic name" value="Procainamide"/>
</dbReference>
<dbReference type="DrugBank" id="DB00205">
    <property type="generic name" value="Pyrimethamine"/>
</dbReference>
<dbReference type="DrugBank" id="DB00243">
    <property type="generic name" value="Ranolazine"/>
</dbReference>
<dbReference type="DrugBank" id="DB12377">
    <property type="generic name" value="Relebactam"/>
</dbReference>
<dbReference type="DrugBank" id="DB14761">
    <property type="generic name" value="Remdesivir"/>
</dbReference>
<dbReference type="DrugBank" id="DB18515">
    <property type="generic name" value="Revumenib"/>
</dbReference>
<dbReference type="DrugBank" id="DB11753">
    <property type="generic name" value="Rifamycin"/>
</dbReference>
<dbReference type="DrugBank" id="DB12457">
    <property type="generic name" value="Rimegepant"/>
</dbReference>
<dbReference type="DrugBank" id="DB14840">
    <property type="generic name" value="Ripretinib"/>
</dbReference>
<dbReference type="DrugBank" id="DB15305">
    <property type="generic name" value="Risdiplam"/>
</dbReference>
<dbReference type="DrugBank" id="DB12332">
    <property type="generic name" value="Rucaparib"/>
</dbReference>
<dbReference type="DrugBank" id="DB15685">
    <property type="generic name" value="Selpercatinib"/>
</dbReference>
<dbReference type="DrugBank" id="DB00877">
    <property type="generic name" value="Sirolimus"/>
</dbReference>
<dbReference type="DrugBank" id="DB19325">
    <property type="generic name" value="Sofpironium"/>
</dbReference>
<dbReference type="DrugBank" id="DB00391">
    <property type="generic name" value="Sulpiride"/>
</dbReference>
<dbReference type="DrugBank" id="DB06608">
    <property type="generic name" value="Tafenoquine"/>
</dbReference>
<dbReference type="DrugBank" id="DB12887">
    <property type="generic name" value="Tazemetostat"/>
</dbReference>
<dbReference type="DrugBank" id="DB15133">
    <property type="generic name" value="Tepotinib"/>
</dbReference>
<dbReference type="DrugBank" id="DB13946">
    <property type="generic name" value="Testosterone undecanoate"/>
</dbReference>
<dbReference type="DrugBank" id="DB08837">
    <property type="generic name" value="Tetraethylammonium"/>
</dbReference>
<dbReference type="DrugBank" id="DB09343">
    <property type="generic name" value="Tipiracil"/>
</dbReference>
<dbReference type="DrugBank" id="DB06137">
    <property type="generic name" value="Tirbanibulin"/>
</dbReference>
<dbReference type="DrugBank" id="DB01030">
    <property type="generic name" value="Topotecan"/>
</dbReference>
<dbReference type="DrugBank" id="DB15442">
    <property type="generic name" value="Trilaciclib"/>
</dbReference>
<dbReference type="DrugBank" id="DB00440">
    <property type="generic name" value="Trimethoprim"/>
</dbReference>
<dbReference type="DrugBank" id="DB11652">
    <property type="generic name" value="Tucatinib"/>
</dbReference>
<dbReference type="DrugBank" id="DB00661">
    <property type="generic name" value="Verapamil"/>
</dbReference>
<dbReference type="DrugBank" id="DB09185">
    <property type="generic name" value="Viloxazine"/>
</dbReference>
<dbReference type="DrugBank" id="DB15688">
    <property type="generic name" value="Zavegepant"/>
</dbReference>
<dbReference type="DrugCentral" id="Q96FL8"/>
<dbReference type="GuidetoPHARMACOLOGY" id="1216"/>
<dbReference type="TCDB" id="2.A.66.1.14">
    <property type="family name" value="the multidrug/oligosaccharidyl-lipid/polysaccharide (mop) flippase superfamily"/>
</dbReference>
<dbReference type="iPTMnet" id="Q96FL8"/>
<dbReference type="PhosphoSitePlus" id="Q96FL8"/>
<dbReference type="BioMuta" id="SLC47A1"/>
<dbReference type="DMDM" id="74731723"/>
<dbReference type="jPOST" id="Q96FL8"/>
<dbReference type="MassIVE" id="Q96FL8"/>
<dbReference type="PaxDb" id="9606-ENSP00000270570"/>
<dbReference type="PeptideAtlas" id="Q96FL8"/>
<dbReference type="ProteomicsDB" id="76538">
    <molecule id="Q96FL8-1"/>
</dbReference>
<dbReference type="ProteomicsDB" id="76539">
    <molecule id="Q96FL8-2"/>
</dbReference>
<dbReference type="ProteomicsDB" id="76540">
    <molecule id="Q96FL8-3"/>
</dbReference>
<dbReference type="Pumba" id="Q96FL8"/>
<dbReference type="Antibodypedia" id="13691">
    <property type="antibodies" value="141 antibodies from 29 providers"/>
</dbReference>
<dbReference type="DNASU" id="55244"/>
<dbReference type="Ensembl" id="ENST00000270570.8">
    <molecule id="Q96FL8-1"/>
    <property type="protein sequence ID" value="ENSP00000270570.4"/>
    <property type="gene ID" value="ENSG00000142494.13"/>
</dbReference>
<dbReference type="Ensembl" id="ENST00000395585.5">
    <molecule id="Q96FL8-3"/>
    <property type="protein sequence ID" value="ENSP00000378951.1"/>
    <property type="gene ID" value="ENSG00000142494.13"/>
</dbReference>
<dbReference type="GeneID" id="55244"/>
<dbReference type="KEGG" id="hsa:55244"/>
<dbReference type="MANE-Select" id="ENST00000270570.8">
    <property type="protein sequence ID" value="ENSP00000270570.4"/>
    <property type="RefSeq nucleotide sequence ID" value="NM_018242.3"/>
    <property type="RefSeq protein sequence ID" value="NP_060712.2"/>
</dbReference>
<dbReference type="UCSC" id="uc002gvx.4">
    <molecule id="Q96FL8-1"/>
    <property type="organism name" value="human"/>
</dbReference>
<dbReference type="AGR" id="HGNC:25588"/>
<dbReference type="CTD" id="55244"/>
<dbReference type="DisGeNET" id="55244"/>
<dbReference type="GeneCards" id="SLC47A1"/>
<dbReference type="HGNC" id="HGNC:25588">
    <property type="gene designation" value="SLC47A1"/>
</dbReference>
<dbReference type="HPA" id="ENSG00000142494">
    <property type="expression patterns" value="Tissue enhanced (adrenal gland, kidney, liver)"/>
</dbReference>
<dbReference type="MIM" id="609832">
    <property type="type" value="gene"/>
</dbReference>
<dbReference type="neXtProt" id="NX_Q96FL8"/>
<dbReference type="OpenTargets" id="ENSG00000142494"/>
<dbReference type="PharmGKB" id="PA162403808"/>
<dbReference type="VEuPathDB" id="HostDB:ENSG00000142494"/>
<dbReference type="eggNOG" id="KOG1347">
    <property type="taxonomic scope" value="Eukaryota"/>
</dbReference>
<dbReference type="GeneTree" id="ENSGT00940000161644"/>
<dbReference type="InParanoid" id="Q96FL8"/>
<dbReference type="OMA" id="WFFVWKL"/>
<dbReference type="OrthoDB" id="2126698at2759"/>
<dbReference type="PAN-GO" id="Q96FL8">
    <property type="GO annotations" value="3 GO annotations based on evolutionary models"/>
</dbReference>
<dbReference type="PhylomeDB" id="Q96FL8"/>
<dbReference type="TreeFam" id="TF324441"/>
<dbReference type="PathwayCommons" id="Q96FL8"/>
<dbReference type="Reactome" id="R-HSA-425366">
    <property type="pathway name" value="Transport of bile salts and organic acids, metal ions and amine compounds"/>
</dbReference>
<dbReference type="SABIO-RK" id="Q96FL8"/>
<dbReference type="SignaLink" id="Q96FL8"/>
<dbReference type="BioGRID-ORCS" id="55244">
    <property type="hits" value="13 hits in 1150 CRISPR screens"/>
</dbReference>
<dbReference type="ChiTaRS" id="SLC47A1">
    <property type="organism name" value="human"/>
</dbReference>
<dbReference type="GeneWiki" id="SLC47A1"/>
<dbReference type="GenomeRNAi" id="55244"/>
<dbReference type="Pharos" id="Q96FL8">
    <property type="development level" value="Tchem"/>
</dbReference>
<dbReference type="PRO" id="PR:Q96FL8"/>
<dbReference type="Proteomes" id="UP000005640">
    <property type="component" value="Chromosome 17"/>
</dbReference>
<dbReference type="RNAct" id="Q96FL8">
    <property type="molecule type" value="protein"/>
</dbReference>
<dbReference type="Bgee" id="ENSG00000142494">
    <property type="expression patterns" value="Expressed in right adrenal gland cortex and 152 other cell types or tissues"/>
</dbReference>
<dbReference type="ExpressionAtlas" id="Q96FL8">
    <property type="expression patterns" value="baseline and differential"/>
</dbReference>
<dbReference type="GO" id="GO:0016324">
    <property type="term" value="C:apical plasma membrane"/>
    <property type="evidence" value="ECO:0000314"/>
    <property type="project" value="UniProtKB"/>
</dbReference>
<dbReference type="GO" id="GO:0016323">
    <property type="term" value="C:basolateral plasma membrane"/>
    <property type="evidence" value="ECO:0000314"/>
    <property type="project" value="ARUK-UCL"/>
</dbReference>
<dbReference type="GO" id="GO:0016020">
    <property type="term" value="C:membrane"/>
    <property type="evidence" value="ECO:0000318"/>
    <property type="project" value="GO_Central"/>
</dbReference>
<dbReference type="GO" id="GO:0005886">
    <property type="term" value="C:plasma membrane"/>
    <property type="evidence" value="ECO:0000314"/>
    <property type="project" value="ARUK-UCL"/>
</dbReference>
<dbReference type="GO" id="GO:0015297">
    <property type="term" value="F:antiporter activity"/>
    <property type="evidence" value="ECO:0000314"/>
    <property type="project" value="UniProtKB"/>
</dbReference>
<dbReference type="GO" id="GO:0015179">
    <property type="term" value="F:L-amino acid transmembrane transporter activity"/>
    <property type="evidence" value="ECO:0000315"/>
    <property type="project" value="ARUK-UCL"/>
</dbReference>
<dbReference type="GO" id="GO:0061459">
    <property type="term" value="F:L-arginine transmembrane transporter activity"/>
    <property type="evidence" value="ECO:0000315"/>
    <property type="project" value="ARUK-UCL"/>
</dbReference>
<dbReference type="GO" id="GO:0015101">
    <property type="term" value="F:organic cation transmembrane transporter activity"/>
    <property type="evidence" value="ECO:0000314"/>
    <property type="project" value="UniProtKB"/>
</dbReference>
<dbReference type="GO" id="GO:0140968">
    <property type="term" value="F:polyspecific organic cation:proton antiporter activity"/>
    <property type="evidence" value="ECO:0000314"/>
    <property type="project" value="UniProtKB"/>
</dbReference>
<dbReference type="GO" id="GO:0015489">
    <property type="term" value="F:putrescine transmembrane transporter activity"/>
    <property type="evidence" value="ECO:0000314"/>
    <property type="project" value="UniProtKB"/>
</dbReference>
<dbReference type="GO" id="GO:0015234">
    <property type="term" value="F:thiamine transmembrane transporter activity"/>
    <property type="evidence" value="ECO:0000314"/>
    <property type="project" value="UniProtKB"/>
</dbReference>
<dbReference type="GO" id="GO:0022857">
    <property type="term" value="F:transmembrane transporter activity"/>
    <property type="evidence" value="ECO:0000304"/>
    <property type="project" value="Reactome"/>
</dbReference>
<dbReference type="GO" id="GO:0042910">
    <property type="term" value="F:xenobiotic transmembrane transporter activity"/>
    <property type="evidence" value="ECO:0000314"/>
    <property type="project" value="UniProtKB"/>
</dbReference>
<dbReference type="GO" id="GO:0089718">
    <property type="term" value="P:amino acid import across plasma membrane"/>
    <property type="evidence" value="ECO:0000315"/>
    <property type="project" value="ARUK-UCL"/>
</dbReference>
<dbReference type="GO" id="GO:1902475">
    <property type="term" value="P:L-alpha-amino acid transmembrane transport"/>
    <property type="evidence" value="ECO:0000315"/>
    <property type="project" value="ARUK-UCL"/>
</dbReference>
<dbReference type="GO" id="GO:0097638">
    <property type="term" value="P:L-arginine import across plasma membrane"/>
    <property type="evidence" value="ECO:0000315"/>
    <property type="project" value="ARUK-UCL"/>
</dbReference>
<dbReference type="GO" id="GO:0015695">
    <property type="term" value="P:organic cation transport"/>
    <property type="evidence" value="ECO:0000314"/>
    <property type="project" value="UniProtKB"/>
</dbReference>
<dbReference type="GO" id="GO:0015847">
    <property type="term" value="P:putrescine transport"/>
    <property type="evidence" value="ECO:0000314"/>
    <property type="project" value="UniProtKB"/>
</dbReference>
<dbReference type="GO" id="GO:0055085">
    <property type="term" value="P:transmembrane transport"/>
    <property type="evidence" value="ECO:0000304"/>
    <property type="project" value="Reactome"/>
</dbReference>
<dbReference type="GO" id="GO:1990961">
    <property type="term" value="P:xenobiotic detoxification by transmembrane export across the plasma membrane"/>
    <property type="evidence" value="ECO:0000314"/>
    <property type="project" value="UniProtKB"/>
</dbReference>
<dbReference type="GO" id="GO:0006855">
    <property type="term" value="P:xenobiotic transmembrane transport"/>
    <property type="evidence" value="ECO:0007669"/>
    <property type="project" value="Ensembl"/>
</dbReference>
<dbReference type="GO" id="GO:0042908">
    <property type="term" value="P:xenobiotic transport"/>
    <property type="evidence" value="ECO:0000315"/>
    <property type="project" value="ARUK-UCL"/>
</dbReference>
<dbReference type="CDD" id="cd13132">
    <property type="entry name" value="MATE_eukaryotic"/>
    <property type="match status" value="1"/>
</dbReference>
<dbReference type="InterPro" id="IPR045069">
    <property type="entry name" value="MATE_euk"/>
</dbReference>
<dbReference type="InterPro" id="IPR002528">
    <property type="entry name" value="MATE_fam"/>
</dbReference>
<dbReference type="NCBIfam" id="TIGR00797">
    <property type="entry name" value="matE"/>
    <property type="match status" value="1"/>
</dbReference>
<dbReference type="PANTHER" id="PTHR11206">
    <property type="entry name" value="MULTIDRUG RESISTANCE PROTEIN"/>
    <property type="match status" value="1"/>
</dbReference>
<dbReference type="Pfam" id="PF01554">
    <property type="entry name" value="MatE"/>
    <property type="match status" value="2"/>
</dbReference>
<accession>Q96FL8</accession>
<accession>Q53HF5</accession>
<accession>Q6PD77</accession>
<accession>Q86VL4</accession>
<accession>Q9NVA3</accession>
<sequence length="570" mass="61922">MEAPEEPAPVRGGPEATLEVRGSRCLRLSAFREELRALLVLAGPAFLVQLMVFLISFISSVFCGHLGKLELDAVTLAIAVINVTGVSVGFGLSSACDTLISQTYGSQNLKHVGVILQRSALVLLLCCFPCWALFLNTQHILLLFRQDPDVSRLTQTYVTIFIPALPATFLYMLQVKYLLNQGIVLPQIVTGVAANLVNALANYLFLHQLHLGVIGSALANLISQYTLALLLFLYILGKKLHQATWGGWSLECLQDWASFLRLAIPSMLMLCMEWWAYEVGSFLSGILGMVELGAQSIVYELAIIVYMVPAGFSVAASVRVGNALGAGDMEQARKSSTVSLLITVLFAVAFSVLLLSCKDHVGYIFTTDRDIINLVAQVVPIYAVSHLFEALACTSGGVLRGSGNQKVGAIVNTIGYYVVGLPIGIALMFATTLGVMGLWSGIIICTVFQAVCFLGFIIQLNWKKACQQAQVHANLKVNNVPRSGNSALPQDPLHPGCPENLEGILTNDVGKTGEPQSDQQMRQEEPLPEHPQDGAKLSRKQLVLRRGLLLLGVFLILLVGILVRFYVRIQ</sequence>
<name>S47A1_HUMAN</name>
<organism>
    <name type="scientific">Homo sapiens</name>
    <name type="common">Human</name>
    <dbReference type="NCBI Taxonomy" id="9606"/>
    <lineage>
        <taxon>Eukaryota</taxon>
        <taxon>Metazoa</taxon>
        <taxon>Chordata</taxon>
        <taxon>Craniata</taxon>
        <taxon>Vertebrata</taxon>
        <taxon>Euteleostomi</taxon>
        <taxon>Mammalia</taxon>
        <taxon>Eutheria</taxon>
        <taxon>Euarchontoglires</taxon>
        <taxon>Primates</taxon>
        <taxon>Haplorrhini</taxon>
        <taxon>Catarrhini</taxon>
        <taxon>Hominidae</taxon>
        <taxon>Homo</taxon>
    </lineage>
</organism>
<keyword id="KW-0007">Acetylation</keyword>
<keyword id="KW-0025">Alternative splicing</keyword>
<keyword id="KW-0050">Antiport</keyword>
<keyword id="KW-1003">Cell membrane</keyword>
<keyword id="KW-0472">Membrane</keyword>
<keyword id="KW-1267">Proteomics identification</keyword>
<keyword id="KW-1185">Reference proteome</keyword>
<keyword id="KW-0812">Transmembrane</keyword>
<keyword id="KW-1133">Transmembrane helix</keyword>
<keyword id="KW-0813">Transport</keyword>
<reference key="1">
    <citation type="journal article" date="2004" name="Nat. Genet.">
        <title>Complete sequencing and characterization of 21,243 full-length human cDNAs.</title>
        <authorList>
            <person name="Ota T."/>
            <person name="Suzuki Y."/>
            <person name="Nishikawa T."/>
            <person name="Otsuki T."/>
            <person name="Sugiyama T."/>
            <person name="Irie R."/>
            <person name="Wakamatsu A."/>
            <person name="Hayashi K."/>
            <person name="Sato H."/>
            <person name="Nagai K."/>
            <person name="Kimura K."/>
            <person name="Makita H."/>
            <person name="Sekine M."/>
            <person name="Obayashi M."/>
            <person name="Nishi T."/>
            <person name="Shibahara T."/>
            <person name="Tanaka T."/>
            <person name="Ishii S."/>
            <person name="Yamamoto J."/>
            <person name="Saito K."/>
            <person name="Kawai Y."/>
            <person name="Isono Y."/>
            <person name="Nakamura Y."/>
            <person name="Nagahari K."/>
            <person name="Murakami K."/>
            <person name="Yasuda T."/>
            <person name="Iwayanagi T."/>
            <person name="Wagatsuma M."/>
            <person name="Shiratori A."/>
            <person name="Sudo H."/>
            <person name="Hosoiri T."/>
            <person name="Kaku Y."/>
            <person name="Kodaira H."/>
            <person name="Kondo H."/>
            <person name="Sugawara M."/>
            <person name="Takahashi M."/>
            <person name="Kanda K."/>
            <person name="Yokoi T."/>
            <person name="Furuya T."/>
            <person name="Kikkawa E."/>
            <person name="Omura Y."/>
            <person name="Abe K."/>
            <person name="Kamihara K."/>
            <person name="Katsuta N."/>
            <person name="Sato K."/>
            <person name="Tanikawa M."/>
            <person name="Yamazaki M."/>
            <person name="Ninomiya K."/>
            <person name="Ishibashi T."/>
            <person name="Yamashita H."/>
            <person name="Murakawa K."/>
            <person name="Fujimori K."/>
            <person name="Tanai H."/>
            <person name="Kimata M."/>
            <person name="Watanabe M."/>
            <person name="Hiraoka S."/>
            <person name="Chiba Y."/>
            <person name="Ishida S."/>
            <person name="Ono Y."/>
            <person name="Takiguchi S."/>
            <person name="Watanabe S."/>
            <person name="Yosida M."/>
            <person name="Hotuta T."/>
            <person name="Kusano J."/>
            <person name="Kanehori K."/>
            <person name="Takahashi-Fujii A."/>
            <person name="Hara H."/>
            <person name="Tanase T.-O."/>
            <person name="Nomura Y."/>
            <person name="Togiya S."/>
            <person name="Komai F."/>
            <person name="Hara R."/>
            <person name="Takeuchi K."/>
            <person name="Arita M."/>
            <person name="Imose N."/>
            <person name="Musashino K."/>
            <person name="Yuuki H."/>
            <person name="Oshima A."/>
            <person name="Sasaki N."/>
            <person name="Aotsuka S."/>
            <person name="Yoshikawa Y."/>
            <person name="Matsunawa H."/>
            <person name="Ichihara T."/>
            <person name="Shiohata N."/>
            <person name="Sano S."/>
            <person name="Moriya S."/>
            <person name="Momiyama H."/>
            <person name="Satoh N."/>
            <person name="Takami S."/>
            <person name="Terashima Y."/>
            <person name="Suzuki O."/>
            <person name="Nakagawa S."/>
            <person name="Senoh A."/>
            <person name="Mizoguchi H."/>
            <person name="Goto Y."/>
            <person name="Shimizu F."/>
            <person name="Wakebe H."/>
            <person name="Hishigaki H."/>
            <person name="Watanabe T."/>
            <person name="Sugiyama A."/>
            <person name="Takemoto M."/>
            <person name="Kawakami B."/>
            <person name="Yamazaki M."/>
            <person name="Watanabe K."/>
            <person name="Kumagai A."/>
            <person name="Itakura S."/>
            <person name="Fukuzumi Y."/>
            <person name="Fujimori Y."/>
            <person name="Komiyama M."/>
            <person name="Tashiro H."/>
            <person name="Tanigami A."/>
            <person name="Fujiwara T."/>
            <person name="Ono T."/>
            <person name="Yamada K."/>
            <person name="Fujii Y."/>
            <person name="Ozaki K."/>
            <person name="Hirao M."/>
            <person name="Ohmori Y."/>
            <person name="Kawabata A."/>
            <person name="Hikiji T."/>
            <person name="Kobatake N."/>
            <person name="Inagaki H."/>
            <person name="Ikema Y."/>
            <person name="Okamoto S."/>
            <person name="Okitani R."/>
            <person name="Kawakami T."/>
            <person name="Noguchi S."/>
            <person name="Itoh T."/>
            <person name="Shigeta K."/>
            <person name="Senba T."/>
            <person name="Matsumura K."/>
            <person name="Nakajima Y."/>
            <person name="Mizuno T."/>
            <person name="Morinaga M."/>
            <person name="Sasaki M."/>
            <person name="Togashi T."/>
            <person name="Oyama M."/>
            <person name="Hata H."/>
            <person name="Watanabe M."/>
            <person name="Komatsu T."/>
            <person name="Mizushima-Sugano J."/>
            <person name="Satoh T."/>
            <person name="Shirai Y."/>
            <person name="Takahashi Y."/>
            <person name="Nakagawa K."/>
            <person name="Okumura K."/>
            <person name="Nagase T."/>
            <person name="Nomura N."/>
            <person name="Kikuchi H."/>
            <person name="Masuho Y."/>
            <person name="Yamashita R."/>
            <person name="Nakai K."/>
            <person name="Yada T."/>
            <person name="Nakamura Y."/>
            <person name="Ohara O."/>
            <person name="Isogai T."/>
            <person name="Sugano S."/>
        </authorList>
    </citation>
    <scope>NUCLEOTIDE SEQUENCE [LARGE SCALE MRNA] (ISOFORM 1)</scope>
</reference>
<reference key="2">
    <citation type="submission" date="2005-04" db="EMBL/GenBank/DDBJ databases">
        <authorList>
            <person name="Suzuki Y."/>
            <person name="Sugano S."/>
            <person name="Totoki Y."/>
            <person name="Toyoda A."/>
            <person name="Takeda T."/>
            <person name="Sakaki Y."/>
            <person name="Tanaka A."/>
            <person name="Yokoyama S."/>
        </authorList>
    </citation>
    <scope>NUCLEOTIDE SEQUENCE [LARGE SCALE MRNA] (ISOFORM 1)</scope>
    <source>
        <tissue>Cerebellum</tissue>
    </source>
</reference>
<reference key="3">
    <citation type="submission" date="2005-07" db="EMBL/GenBank/DDBJ databases">
        <authorList>
            <person name="Mural R.J."/>
            <person name="Istrail S."/>
            <person name="Sutton G.G."/>
            <person name="Florea L."/>
            <person name="Halpern A.L."/>
            <person name="Mobarry C.M."/>
            <person name="Lippert R."/>
            <person name="Walenz B."/>
            <person name="Shatkay H."/>
            <person name="Dew I."/>
            <person name="Miller J.R."/>
            <person name="Flanigan M.J."/>
            <person name="Edwards N.J."/>
            <person name="Bolanos R."/>
            <person name="Fasulo D."/>
            <person name="Halldorsson B.V."/>
            <person name="Hannenhalli S."/>
            <person name="Turner R."/>
            <person name="Yooseph S."/>
            <person name="Lu F."/>
            <person name="Nusskern D.R."/>
            <person name="Shue B.C."/>
            <person name="Zheng X.H."/>
            <person name="Zhong F."/>
            <person name="Delcher A.L."/>
            <person name="Huson D.H."/>
            <person name="Kravitz S.A."/>
            <person name="Mouchard L."/>
            <person name="Reinert K."/>
            <person name="Remington K.A."/>
            <person name="Clark A.G."/>
            <person name="Waterman M.S."/>
            <person name="Eichler E.E."/>
            <person name="Adams M.D."/>
            <person name="Hunkapiller M.W."/>
            <person name="Myers E.W."/>
            <person name="Venter J.C."/>
        </authorList>
    </citation>
    <scope>NUCLEOTIDE SEQUENCE [LARGE SCALE GENOMIC DNA]</scope>
</reference>
<reference key="4">
    <citation type="journal article" date="2004" name="Genome Res.">
        <title>The status, quality, and expansion of the NIH full-length cDNA project: the Mammalian Gene Collection (MGC).</title>
        <authorList>
            <consortium name="The MGC Project Team"/>
        </authorList>
    </citation>
    <scope>NUCLEOTIDE SEQUENCE [LARGE SCALE MRNA] (ISOFORMS 1; 2 AND 3)</scope>
    <source>
        <tissue>Colon</tissue>
        <tissue>Eye</tissue>
    </source>
</reference>
<reference key="5">
    <citation type="journal article" date="2005" name="Proc. Natl. Acad. Sci. U.S.A.">
        <title>A human transporter protein that mediates the final excretion step for toxic organic cations.</title>
        <authorList>
            <person name="Otsuka M."/>
            <person name="Matsumoto T."/>
            <person name="Morimoto R."/>
            <person name="Arioka S."/>
            <person name="Omote H."/>
            <person name="Moriyama Y."/>
        </authorList>
    </citation>
    <scope>FUNCTION</scope>
    <scope>TRANSPORTER ACTIVITY</scope>
    <scope>MUTAGENESIS OF GLU-273</scope>
    <scope>TISSUE SPECIFICITY</scope>
    <scope>SUBCELLULAR LOCATION</scope>
    <scope>BIOPHYSICOCHEMICAL PROPERTIES</scope>
    <scope>MISCELLANEOUS</scope>
</reference>
<reference key="6">
    <citation type="journal article" date="2006" name="Am. J. Physiol.">
        <title>Wide variety of locations for rodent MATE1, a transporter protein that mediates the final excretion step for toxic organic cations.</title>
        <authorList>
            <person name="Hiasa M."/>
            <person name="Matsumoto T."/>
            <person name="Komatsu T."/>
            <person name="Moriyama Y."/>
        </authorList>
    </citation>
    <scope>SUBCELLULAR LOCATION</scope>
</reference>
<reference key="7">
    <citation type="journal article" date="2006" name="J. Pharmacol. Exp. Ther.">
        <title>Cisplatin and oxaliplatin, but not carboplatin and nedaplatin, are substrates for human organic cation transporters (SLC22A1-3 and multidrug and toxin extrusion family).</title>
        <authorList>
            <person name="Yonezawa A."/>
            <person name="Masuda S."/>
            <person name="Yokoo S."/>
            <person name="Katsura T."/>
            <person name="Inui K."/>
        </authorList>
    </citation>
    <scope>MISCELLANEOUS</scope>
</reference>
<reference key="8">
    <citation type="journal article" date="2007" name="Biochem. Pharmacol.">
        <title>Substrate specificity of MATE1 and MATE2-K, human multidrug and toxin extrusions/H(+)-organic cation antiporters.</title>
        <authorList>
            <person name="Tanihara Y."/>
            <person name="Masuda S."/>
            <person name="Sato T."/>
            <person name="Katsura T."/>
            <person name="Ogawa O."/>
            <person name="Inui K."/>
        </authorList>
    </citation>
    <scope>FUNCTION</scope>
    <scope>TRANSPORTER ACTIVITY</scope>
    <scope>BIOPHYSICOCHEMICAL PROPERTIES</scope>
    <scope>TISSUE SPECIFICITY</scope>
    <scope>SUBSTRATE SPECIFICITY</scope>
    <scope>MISCELLANEOUS</scope>
</reference>
<reference key="9">
    <citation type="journal article" date="2007" name="Biochem. Pharmacol.">
        <title>Differential contribution of organic cation transporters, OCT2 and MATE1, in platinum agent-induced nephrotoxicity.</title>
        <authorList>
            <person name="Yokoo S."/>
            <person name="Yonezawa A."/>
            <person name="Masuda S."/>
            <person name="Fukatsu A."/>
            <person name="Katsura T."/>
            <person name="Inui K."/>
        </authorList>
    </citation>
    <scope>FUNCTION</scope>
    <scope>TRANSPORTER ACTIVITY</scope>
    <scope>MISCELLANEOUS</scope>
</reference>
<reference key="10">
    <citation type="journal article" date="2007" name="J. Pharmacol. Exp. Ther.">
        <title>Transport of paraquat by human organic cation transporters and multidrug and toxic compound extrusion family.</title>
        <authorList>
            <person name="Chen Y."/>
            <person name="Zhang S."/>
            <person name="Sorani M."/>
            <person name="Giacomini K.M."/>
        </authorList>
    </citation>
    <scope>FUNCTION</scope>
    <scope>TRANSPORTER ACTIVITY</scope>
    <scope>MISCELLANEOUS</scope>
</reference>
<reference key="11">
    <citation type="journal article" date="2008" name="Am. J. Physiol.">
        <title>Role of glutamate residues in substrate recognition by human MATE1 polyspecific H+/organic cation exporter.</title>
        <authorList>
            <person name="Matsumoto T."/>
            <person name="Kanamoto T."/>
            <person name="Otsuka M."/>
            <person name="Omote H."/>
            <person name="Moriyama Y."/>
        </authorList>
    </citation>
    <scope>FUNCTION</scope>
    <scope>TRANSPORTER ACTIVITY</scope>
    <scope>SUBCELLULAR LOCATION</scope>
    <scope>MISCELLANEOUS</scope>
    <scope>MUTAGENESIS OF GLU-273; GLU-278; GLU-300 AND GLU-389</scope>
</reference>
<reference key="12">
    <citation type="journal article" date="2009" name="J. Hum. Genet.">
        <title>Identification of multidrug and toxin extrusion (MATE1 and MATE2-K) variants with complete loss of transport activity.</title>
        <authorList>
            <person name="Kajiwara M."/>
            <person name="Terada T."/>
            <person name="Ogasawara K."/>
            <person name="Iwano J."/>
            <person name="Katsura T."/>
            <person name="Fukatsu A."/>
            <person name="Doi T."/>
            <person name="Inui K."/>
        </authorList>
    </citation>
    <scope>VARIANTS LEU-10; ASP-64; VAL-310; ALA-328 AND SER-474</scope>
    <scope>CHARACTERIZATION OF VARIANTS LEU-10; ASP-64; VAL-310; ALA-328 AND SER-474</scope>
    <scope>FUNCTION</scope>
    <scope>TRANSPORTER ACTIVITY</scope>
    <scope>SUBCELLULAR LOCATION</scope>
    <scope>MISCELLANEOUS</scope>
</reference>
<reference key="13">
    <citation type="journal article" date="2011" name="Mol. Pharm.">
        <title>OCT2 and MATE1 provide bidirectional agmatine transport.</title>
        <authorList>
            <person name="Winter T.N."/>
            <person name="Elmquist W.F."/>
            <person name="Fairbanks C.A."/>
        </authorList>
    </citation>
    <scope>FUNCTION</scope>
    <scope>TRANSPORTER ACTIVITY</scope>
    <scope>BIOPHYSICOCHEMICAL PROPERTIES</scope>
    <scope>MISCELLANEOUS</scope>
</reference>
<reference key="14">
    <citation type="journal article" date="2012" name="Proc. Natl. Acad. Sci. U.S.A.">
        <title>N-terminal acetylome analyses and functional insights of the N-terminal acetyltransferase NatB.</title>
        <authorList>
            <person name="Van Damme P."/>
            <person name="Lasa M."/>
            <person name="Polevoda B."/>
            <person name="Gazquez C."/>
            <person name="Elosegui-Artola A."/>
            <person name="Kim D.S."/>
            <person name="De Juan-Pardo E."/>
            <person name="Demeyer K."/>
            <person name="Hole K."/>
            <person name="Larrea E."/>
            <person name="Timmerman E."/>
            <person name="Prieto J."/>
            <person name="Arnesen T."/>
            <person name="Sherman F."/>
            <person name="Gevaert K."/>
            <person name="Aldabe R."/>
        </authorList>
    </citation>
    <scope>ACETYLATION [LARGE SCALE ANALYSIS] AT MET-1</scope>
    <scope>IDENTIFICATION BY MASS SPECTROMETRY [LARGE SCALE ANALYSIS]</scope>
</reference>
<reference key="15">
    <citation type="journal article" date="2014" name="Proc. Natl. Acad. Sci. U.S.A.">
        <title>OCT1 is a high-capacity thiamine transporter that regulates hepatic steatosis and is a target of metformin.</title>
        <authorList>
            <person name="Chen L."/>
            <person name="Shu Y."/>
            <person name="Liang X."/>
            <person name="Chen E.C."/>
            <person name="Yee S.W."/>
            <person name="Zur A.A."/>
            <person name="Li S."/>
            <person name="Xu L."/>
            <person name="Keshari K.R."/>
            <person name="Lin M.J."/>
            <person name="Chien H.C."/>
            <person name="Zhang Y."/>
            <person name="Morrissey K.M."/>
            <person name="Liu J."/>
            <person name="Ostrem J."/>
            <person name="Younger N.S."/>
            <person name="Kurhanewicz J."/>
            <person name="Shokat K.M."/>
            <person name="Ashrafi K."/>
            <person name="Giacomini K.M."/>
        </authorList>
    </citation>
    <scope>FUNCTION</scope>
    <scope>TRANSPORTER ACTIVITY</scope>
</reference>
<reference key="16">
    <citation type="journal article" date="2016" name="Nat. Commun.">
        <title>A phosphotyrosine switch regulates organic cation transporters.</title>
        <authorList>
            <person name="Sprowl J.A."/>
            <person name="Ong S.S."/>
            <person name="Gibson A.A."/>
            <person name="Hu S."/>
            <person name="Du G."/>
            <person name="Lin W."/>
            <person name="Li L."/>
            <person name="Bharill S."/>
            <person name="Ness R.A."/>
            <person name="Stecula A."/>
            <person name="Offer S.M."/>
            <person name="Diasio R.B."/>
            <person name="Nies A.T."/>
            <person name="Schwab M."/>
            <person name="Cavaletti G."/>
            <person name="Schlatter E."/>
            <person name="Ciarimboli G."/>
            <person name="Schellens J.H.M."/>
            <person name="Isacoff E.Y."/>
            <person name="Sali A."/>
            <person name="Chen T."/>
            <person name="Baker S.D."/>
            <person name="Sparreboom A."/>
            <person name="Pabla N."/>
        </authorList>
    </citation>
    <scope>MUTAGENESIS OF TYR-299</scope>
    <scope>MISCELLANEOUS</scope>
</reference>
<reference key="17">
    <citation type="journal article" date="2022" name="Drug Metab. Dispos.">
        <title>Localization of Xenobiotic Transporters Expressed at the Human Blood-Testis Barrier.</title>
        <authorList>
            <person name="Hau R.K."/>
            <person name="Klein R.R."/>
            <person name="Wright S.H."/>
            <person name="Cherrington N.J."/>
        </authorList>
    </citation>
    <scope>FUNCTION</scope>
    <scope>TISSUE SPECIFICITY</scope>
</reference>
<evidence type="ECO:0000255" key="1"/>
<evidence type="ECO:0000256" key="2">
    <source>
        <dbReference type="SAM" id="MobiDB-lite"/>
    </source>
</evidence>
<evidence type="ECO:0000269" key="3">
    <source>
    </source>
</evidence>
<evidence type="ECO:0000269" key="4">
    <source>
    </source>
</evidence>
<evidence type="ECO:0000269" key="5">
    <source>
    </source>
</evidence>
<evidence type="ECO:0000269" key="6">
    <source>
    </source>
</evidence>
<evidence type="ECO:0000269" key="7">
    <source>
    </source>
</evidence>
<evidence type="ECO:0000269" key="8">
    <source>
    </source>
</evidence>
<evidence type="ECO:0000269" key="9">
    <source>
    </source>
</evidence>
<evidence type="ECO:0000269" key="10">
    <source>
    </source>
</evidence>
<evidence type="ECO:0000269" key="11">
    <source>
    </source>
</evidence>
<evidence type="ECO:0000269" key="12">
    <source>
    </source>
</evidence>
<evidence type="ECO:0000269" key="13">
    <source>
    </source>
</evidence>
<evidence type="ECO:0000269" key="14">
    <source>
    </source>
</evidence>
<evidence type="ECO:0000303" key="15">
    <source>
    </source>
</evidence>
<evidence type="ECO:0000303" key="16">
    <source>
    </source>
</evidence>
<evidence type="ECO:0000305" key="17"/>
<evidence type="ECO:0000305" key="18">
    <source>
    </source>
</evidence>
<evidence type="ECO:0000305" key="19">
    <source>
    </source>
</evidence>
<evidence type="ECO:0000305" key="20">
    <source>
    </source>
</evidence>
<evidence type="ECO:0000312" key="21">
    <source>
        <dbReference type="HGNC" id="HGNC:25588"/>
    </source>
</evidence>
<evidence type="ECO:0007744" key="22">
    <source>
    </source>
</evidence>
<proteinExistence type="evidence at protein level"/>
<feature type="chain" id="PRO_0000312845" description="Multidrug and toxin extrusion protein 1">
    <location>
        <begin position="1"/>
        <end position="570"/>
    </location>
</feature>
<feature type="topological domain" description="Cytoplasmic" evidence="1">
    <location>
        <begin position="1"/>
        <end position="37"/>
    </location>
</feature>
<feature type="transmembrane region" description="Helical" evidence="1">
    <location>
        <begin position="38"/>
        <end position="58"/>
    </location>
</feature>
<feature type="topological domain" description="Extracellular" evidence="1">
    <location>
        <begin position="59"/>
        <end position="72"/>
    </location>
</feature>
<feature type="transmembrane region" description="Helical" evidence="1">
    <location>
        <begin position="73"/>
        <end position="93"/>
    </location>
</feature>
<feature type="topological domain" description="Cytoplasmic" evidence="1">
    <location>
        <begin position="94"/>
        <end position="123"/>
    </location>
</feature>
<feature type="transmembrane region" description="Helical" evidence="1">
    <location>
        <begin position="124"/>
        <end position="144"/>
    </location>
</feature>
<feature type="topological domain" description="Extracellular" evidence="1">
    <location>
        <begin position="145"/>
        <end position="152"/>
    </location>
</feature>
<feature type="transmembrane region" description="Helical" evidence="1">
    <location>
        <begin position="153"/>
        <end position="173"/>
    </location>
</feature>
<feature type="topological domain" description="Cytoplasmic" evidence="1">
    <location>
        <begin position="174"/>
        <end position="176"/>
    </location>
</feature>
<feature type="transmembrane region" description="Helical" evidence="1">
    <location>
        <begin position="177"/>
        <end position="197"/>
    </location>
</feature>
<feature type="topological domain" description="Extracellular" evidence="1">
    <location>
        <begin position="198"/>
        <end position="216"/>
    </location>
</feature>
<feature type="transmembrane region" description="Helical" evidence="1">
    <location>
        <begin position="217"/>
        <end position="237"/>
    </location>
</feature>
<feature type="topological domain" description="Cytoplasmic" evidence="1">
    <location>
        <begin position="238"/>
        <end position="256"/>
    </location>
</feature>
<feature type="transmembrane region" description="Helical" evidence="1">
    <location>
        <begin position="257"/>
        <end position="276"/>
    </location>
</feature>
<feature type="topological domain" description="Extracellular" evidence="1">
    <location>
        <begin position="277"/>
        <end position="295"/>
    </location>
</feature>
<feature type="transmembrane region" description="Helical" evidence="1">
    <location>
        <begin position="296"/>
        <end position="316"/>
    </location>
</feature>
<feature type="topological domain" description="Cytoplasmic" evidence="1">
    <location>
        <begin position="317"/>
        <end position="336"/>
    </location>
</feature>
<feature type="transmembrane region" description="Helical" evidence="1">
    <location>
        <begin position="337"/>
        <end position="357"/>
    </location>
</feature>
<feature type="topological domain" description="Extracellular" evidence="1">
    <location>
        <begin position="358"/>
        <end position="370"/>
    </location>
</feature>
<feature type="transmembrane region" description="Helical" evidence="1">
    <location>
        <begin position="371"/>
        <end position="391"/>
    </location>
</feature>
<feature type="topological domain" description="Cytoplasmic" evidence="1">
    <location>
        <begin position="392"/>
        <end position="408"/>
    </location>
</feature>
<feature type="transmembrane region" description="Helical" evidence="1">
    <location>
        <begin position="409"/>
        <end position="429"/>
    </location>
</feature>
<feature type="topological domain" description="Extracellular" evidence="1">
    <location>
        <begin position="430"/>
        <end position="437"/>
    </location>
</feature>
<feature type="transmembrane region" description="Helical" evidence="1">
    <location>
        <begin position="438"/>
        <end position="458"/>
    </location>
</feature>
<feature type="topological domain" description="Cytoplasmic" evidence="1">
    <location>
        <begin position="459"/>
        <end position="546"/>
    </location>
</feature>
<feature type="transmembrane region" description="Helical" evidence="1">
    <location>
        <begin position="547"/>
        <end position="567"/>
    </location>
</feature>
<feature type="topological domain" description="Extracellular" evidence="1">
    <location>
        <begin position="568"/>
        <end position="570"/>
    </location>
</feature>
<feature type="region of interest" description="Disordered" evidence="2">
    <location>
        <begin position="508"/>
        <end position="534"/>
    </location>
</feature>
<feature type="compositionally biased region" description="Basic and acidic residues" evidence="2">
    <location>
        <begin position="521"/>
        <end position="533"/>
    </location>
</feature>
<feature type="modified residue" description="N-acetylmethionine" evidence="22">
    <location>
        <position position="1"/>
    </location>
</feature>
<feature type="splice variant" id="VSP_029903" description="In isoform 2." evidence="15">
    <original>ILGMV</original>
    <variation>LYEDG</variation>
    <location>
        <begin position="286"/>
        <end position="290"/>
    </location>
</feature>
<feature type="splice variant" id="VSP_029904" description="In isoform 2." evidence="15">
    <location>
        <begin position="291"/>
        <end position="570"/>
    </location>
</feature>
<feature type="splice variant" id="VSP_029905" description="In isoform 3." evidence="15">
    <original>VGILVRFYVRIQ</original>
    <variation>AGVRWCDHSSLQPRTLGLQAILLCQPPE</variation>
    <location>
        <begin position="559"/>
        <end position="570"/>
    </location>
</feature>
<feature type="sequence variant" id="VAR_087027" description="Does not affect plasma membrane expression; does not affect TEA and metformin transport; dbSNP:rs555657341." evidence="10">
    <original>V</original>
    <variation>L</variation>
    <location>
        <position position="10"/>
    </location>
</feature>
<feature type="sequence variant" id="VAR_087028" description="Found in a patient with renal disease; uncertain significance; decreases plasma membrane expression; transport of TEA and metformin are reduced by at least 90%; dbSNP:rs77630697." evidence="10">
    <original>G</original>
    <variation>D</variation>
    <location>
        <position position="64"/>
    </location>
</feature>
<feature type="sequence variant" id="VAR_087029" description="Found in a patient with renal disease; uncertain significance; does not affect plasma membrane expression; decreases TEA and metformin transport; Vmax value for TEA transport is decreased; Km value for TEA is increased; dbSNP:rs1322335818." evidence="10">
    <original>A</original>
    <variation>V</variation>
    <location>
        <position position="310"/>
    </location>
</feature>
<feature type="sequence variant" id="VAR_087030" description="Found in a patient with renal disease; uncertain significance; decreases plasma membrane expression; decreases TEA and metformin transport; Vmax value for TEA transport is decreased; dbSNP:rs149774861." evidence="10">
    <original>D</original>
    <variation>A</variation>
    <location>
        <position position="328"/>
    </location>
</feature>
<feature type="sequence variant" id="VAR_037587" description="In dbSNP:rs35790011.">
    <original>V</original>
    <variation>I</variation>
    <location>
        <position position="338"/>
    </location>
</feature>
<feature type="sequence variant" id="VAR_087031" description="Found in a patient with renal disease; uncertain significance; does not affect plasma membrane localization; decreases TEA transport; Km value for TEA is increased; does not affect metformin transport; dbSNP:rs1480708114." evidence="10">
    <original>N</original>
    <variation>S</variation>
    <location>
        <position position="474"/>
    </location>
</feature>
<feature type="mutagenesis site" description="Abolishes membrane subcellular location. Abolishes TEA transport." evidence="9">
    <original>E</original>
    <variation>A</variation>
    <location>
        <position position="273"/>
    </location>
</feature>
<feature type="mutagenesis site" description="Does not affect membrane subcellular location. Decreases TEA transport. Higher affinity for cimetidine and reduced affinity to TEA." evidence="9">
    <original>E</original>
    <variation>D</variation>
    <location>
        <position position="273"/>
    </location>
</feature>
<feature type="mutagenesis site" description="No change in subcellular location and abolition of MATE1-dependent TEA transport activity." evidence="3">
    <original>E</original>
    <variation>Q</variation>
    <location>
        <position position="273"/>
    </location>
</feature>
<feature type="mutagenesis site" description="Does not affect membrane subcellular location. Abolishes TEA transport." evidence="9">
    <original>E</original>
    <variation>A</variation>
    <location>
        <position position="278"/>
    </location>
</feature>
<feature type="mutagenesis site" description="Does not affect membrane subcellular location. Decreases TEA transport." evidence="9">
    <original>E</original>
    <variation>D</variation>
    <location>
        <position position="278"/>
    </location>
</feature>
<feature type="mutagenesis site" description="Decreased TEA and metformin uptake." evidence="13">
    <original>Y</original>
    <variation>F</variation>
    <location>
        <position position="299"/>
    </location>
</feature>
<feature type="mutagenesis site" description="Does not affect membrane subcellular location. Decreases TEA transport." evidence="9">
    <original>E</original>
    <variation>A</variation>
    <variation>D</variation>
    <location>
        <position position="300"/>
    </location>
</feature>
<feature type="mutagenesis site" description="Does not affect membrane subcellular location. Decreases TEA transport." evidence="9">
    <original>E</original>
    <variation>A</variation>
    <variation>D</variation>
    <location>
        <position position="389"/>
    </location>
</feature>
<feature type="sequence conflict" description="In Ref. 2; BAD96345." evidence="17" ref="2">
    <original>L</original>
    <variation>R</variation>
    <location>
        <position position="50"/>
    </location>
</feature>
<feature type="sequence conflict" description="In Ref. 1; BAA91852." evidence="17" ref="1">
    <original>P</original>
    <variation>L</variation>
    <location>
        <position position="309"/>
    </location>
</feature>
<feature type="sequence conflict" description="In Ref. 2; BAD96345." evidence="17" ref="2">
    <original>F</original>
    <variation>L</variation>
    <location>
        <position position="448"/>
    </location>
</feature>
<feature type="sequence conflict" description="In Ref. 2; BAD96345." evidence="17" ref="2">
    <original>N</original>
    <variation>D</variation>
    <location>
        <position position="507"/>
    </location>
</feature>
<protein>
    <recommendedName>
        <fullName evidence="16">Multidrug and toxin extrusion protein 1</fullName>
        <shortName>MATE-1</shortName>
        <shortName>hMATE-1</shortName>
    </recommendedName>
    <alternativeName>
        <fullName>Solute carrier family 47 member 1</fullName>
    </alternativeName>
</protein>
<gene>
    <name evidence="21" type="primary">SLC47A1</name>
    <name evidence="16" type="synonym">MATE1</name>
</gene>